<evidence type="ECO:0000255" key="1">
    <source>
        <dbReference type="HAMAP-Rule" id="MF_01393"/>
    </source>
</evidence>
<dbReference type="EMBL" id="CP000269">
    <property type="protein sequence ID" value="ABR89125.1"/>
    <property type="molecule type" value="Genomic_DNA"/>
</dbReference>
<dbReference type="RefSeq" id="WP_012081468.1">
    <property type="nucleotide sequence ID" value="NC_009659.1"/>
</dbReference>
<dbReference type="SMR" id="A6T476"/>
<dbReference type="STRING" id="375286.mma_3633"/>
<dbReference type="KEGG" id="mms:mma_3633"/>
<dbReference type="eggNOG" id="COG0356">
    <property type="taxonomic scope" value="Bacteria"/>
</dbReference>
<dbReference type="HOGENOM" id="CLU_041018_1_0_4"/>
<dbReference type="OrthoDB" id="9789241at2"/>
<dbReference type="Proteomes" id="UP000006388">
    <property type="component" value="Chromosome"/>
</dbReference>
<dbReference type="GO" id="GO:0005886">
    <property type="term" value="C:plasma membrane"/>
    <property type="evidence" value="ECO:0007669"/>
    <property type="project" value="UniProtKB-SubCell"/>
</dbReference>
<dbReference type="GO" id="GO:0045259">
    <property type="term" value="C:proton-transporting ATP synthase complex"/>
    <property type="evidence" value="ECO:0007669"/>
    <property type="project" value="UniProtKB-KW"/>
</dbReference>
<dbReference type="GO" id="GO:0046933">
    <property type="term" value="F:proton-transporting ATP synthase activity, rotational mechanism"/>
    <property type="evidence" value="ECO:0007669"/>
    <property type="project" value="UniProtKB-UniRule"/>
</dbReference>
<dbReference type="GO" id="GO:0042777">
    <property type="term" value="P:proton motive force-driven plasma membrane ATP synthesis"/>
    <property type="evidence" value="ECO:0007669"/>
    <property type="project" value="TreeGrafter"/>
</dbReference>
<dbReference type="CDD" id="cd00310">
    <property type="entry name" value="ATP-synt_Fo_a_6"/>
    <property type="match status" value="1"/>
</dbReference>
<dbReference type="FunFam" id="1.20.120.220:FF:000002">
    <property type="entry name" value="ATP synthase subunit a"/>
    <property type="match status" value="1"/>
</dbReference>
<dbReference type="Gene3D" id="1.20.120.220">
    <property type="entry name" value="ATP synthase, F0 complex, subunit A"/>
    <property type="match status" value="1"/>
</dbReference>
<dbReference type="HAMAP" id="MF_01393">
    <property type="entry name" value="ATP_synth_a_bact"/>
    <property type="match status" value="1"/>
</dbReference>
<dbReference type="InterPro" id="IPR045082">
    <property type="entry name" value="ATP_syn_F0_a_bact/chloroplast"/>
</dbReference>
<dbReference type="InterPro" id="IPR000568">
    <property type="entry name" value="ATP_synth_F0_asu"/>
</dbReference>
<dbReference type="InterPro" id="IPR023011">
    <property type="entry name" value="ATP_synth_F0_asu_AS"/>
</dbReference>
<dbReference type="InterPro" id="IPR035908">
    <property type="entry name" value="F0_ATP_A_sf"/>
</dbReference>
<dbReference type="NCBIfam" id="TIGR01131">
    <property type="entry name" value="ATP_synt_6_or_A"/>
    <property type="match status" value="1"/>
</dbReference>
<dbReference type="NCBIfam" id="NF004477">
    <property type="entry name" value="PRK05815.1-1"/>
    <property type="match status" value="1"/>
</dbReference>
<dbReference type="PANTHER" id="PTHR42823">
    <property type="entry name" value="ATP SYNTHASE SUBUNIT A, CHLOROPLASTIC"/>
    <property type="match status" value="1"/>
</dbReference>
<dbReference type="PANTHER" id="PTHR42823:SF3">
    <property type="entry name" value="ATP SYNTHASE SUBUNIT A, CHLOROPLASTIC"/>
    <property type="match status" value="1"/>
</dbReference>
<dbReference type="Pfam" id="PF00119">
    <property type="entry name" value="ATP-synt_A"/>
    <property type="match status" value="1"/>
</dbReference>
<dbReference type="SUPFAM" id="SSF81336">
    <property type="entry name" value="F1F0 ATP synthase subunit A"/>
    <property type="match status" value="1"/>
</dbReference>
<dbReference type="PROSITE" id="PS00449">
    <property type="entry name" value="ATPASE_A"/>
    <property type="match status" value="1"/>
</dbReference>
<accession>A6T476</accession>
<sequence length="273" mass="29979">MATDHAAPTASEYIVHHLGHFSTKHQDKIVDFSIINMDTIFWSIFAGVVGCLFMYLAARKATSGVPGRFQAAVEMIVEMVDNQAKSIVHGDRTFIAPLALTVFVWVALMNSLDFLPVDMFSAFFHAVGLDSLITHHRVVPTADLNGTMGIALGVFALMIFYNIKIKGAGGFVHELFAAPFGIWLAPFNLLLNMIEFAAKTVSLAMRLFGNMYAGELLFLLIALLGSTATAFGFFGHVVAGTLWAIFHILIVFLQAFIFMMLTLVYIGQAHESH</sequence>
<organism>
    <name type="scientific">Janthinobacterium sp. (strain Marseille)</name>
    <name type="common">Minibacterium massiliensis</name>
    <dbReference type="NCBI Taxonomy" id="375286"/>
    <lineage>
        <taxon>Bacteria</taxon>
        <taxon>Pseudomonadati</taxon>
        <taxon>Pseudomonadota</taxon>
        <taxon>Betaproteobacteria</taxon>
        <taxon>Burkholderiales</taxon>
        <taxon>Oxalobacteraceae</taxon>
        <taxon>Janthinobacterium</taxon>
    </lineage>
</organism>
<reference key="1">
    <citation type="journal article" date="2007" name="PLoS Genet.">
        <title>Genome analysis of Minibacterium massiliensis highlights the convergent evolution of water-living bacteria.</title>
        <authorList>
            <person name="Audic S."/>
            <person name="Robert C."/>
            <person name="Campagna B."/>
            <person name="Parinello H."/>
            <person name="Claverie J.-M."/>
            <person name="Raoult D."/>
            <person name="Drancourt M."/>
        </authorList>
    </citation>
    <scope>NUCLEOTIDE SEQUENCE [LARGE SCALE GENOMIC DNA]</scope>
    <source>
        <strain>Marseille</strain>
    </source>
</reference>
<keyword id="KW-0066">ATP synthesis</keyword>
<keyword id="KW-0997">Cell inner membrane</keyword>
<keyword id="KW-1003">Cell membrane</keyword>
<keyword id="KW-0138">CF(0)</keyword>
<keyword id="KW-0375">Hydrogen ion transport</keyword>
<keyword id="KW-0406">Ion transport</keyword>
<keyword id="KW-0472">Membrane</keyword>
<keyword id="KW-0812">Transmembrane</keyword>
<keyword id="KW-1133">Transmembrane helix</keyword>
<keyword id="KW-0813">Transport</keyword>
<comment type="function">
    <text evidence="1">Key component of the proton channel; it plays a direct role in the translocation of protons across the membrane.</text>
</comment>
<comment type="subunit">
    <text evidence="1">F-type ATPases have 2 components, CF(1) - the catalytic core - and CF(0) - the membrane proton channel. CF(1) has five subunits: alpha(3), beta(3), gamma(1), delta(1), epsilon(1). CF(0) has three main subunits: a(1), b(2) and c(9-12). The alpha and beta chains form an alternating ring which encloses part of the gamma chain. CF(1) is attached to CF(0) by a central stalk formed by the gamma and epsilon chains, while a peripheral stalk is formed by the delta and b chains.</text>
</comment>
<comment type="subcellular location">
    <subcellularLocation>
        <location evidence="1">Cell inner membrane</location>
        <topology evidence="1">Multi-pass membrane protein</topology>
    </subcellularLocation>
</comment>
<comment type="similarity">
    <text evidence="1">Belongs to the ATPase A chain family.</text>
</comment>
<gene>
    <name evidence="1" type="primary">atpB</name>
    <name type="ordered locus">mma_3633</name>
</gene>
<protein>
    <recommendedName>
        <fullName evidence="1">ATP synthase subunit a</fullName>
    </recommendedName>
    <alternativeName>
        <fullName evidence="1">ATP synthase F0 sector subunit a</fullName>
    </alternativeName>
    <alternativeName>
        <fullName evidence="1">F-ATPase subunit 6</fullName>
    </alternativeName>
</protein>
<proteinExistence type="inferred from homology"/>
<feature type="chain" id="PRO_1000145281" description="ATP synthase subunit a">
    <location>
        <begin position="1"/>
        <end position="273"/>
    </location>
</feature>
<feature type="transmembrane region" description="Helical" evidence="1">
    <location>
        <begin position="34"/>
        <end position="54"/>
    </location>
</feature>
<feature type="transmembrane region" description="Helical" evidence="1">
    <location>
        <begin position="94"/>
        <end position="114"/>
    </location>
</feature>
<feature type="transmembrane region" description="Helical" evidence="1">
    <location>
        <begin position="115"/>
        <end position="135"/>
    </location>
</feature>
<feature type="transmembrane region" description="Helical" evidence="1">
    <location>
        <begin position="143"/>
        <end position="163"/>
    </location>
</feature>
<feature type="transmembrane region" description="Helical" evidence="1">
    <location>
        <begin position="171"/>
        <end position="191"/>
    </location>
</feature>
<feature type="transmembrane region" description="Helical" evidence="1">
    <location>
        <begin position="218"/>
        <end position="238"/>
    </location>
</feature>
<feature type="transmembrane region" description="Helical" evidence="1">
    <location>
        <begin position="244"/>
        <end position="264"/>
    </location>
</feature>
<name>ATP6_JANMA</name>